<evidence type="ECO:0000250" key="1"/>
<evidence type="ECO:0000256" key="2">
    <source>
        <dbReference type="SAM" id="MobiDB-lite"/>
    </source>
</evidence>
<evidence type="ECO:0000305" key="3"/>
<feature type="chain" id="PRO_0000327972" description="Heat shock cognate 70 kDa protein 3">
    <location>
        <begin position="1"/>
        <end position="630"/>
    </location>
</feature>
<feature type="region of interest" description="Disordered" evidence="2">
    <location>
        <begin position="611"/>
        <end position="630"/>
    </location>
</feature>
<feature type="compositionally biased region" description="Low complexity" evidence="2">
    <location>
        <begin position="615"/>
        <end position="630"/>
    </location>
</feature>
<protein>
    <recommendedName>
        <fullName>Heat shock cognate 70 kDa protein 3</fullName>
        <shortName>HSC70-3</shortName>
    </recommendedName>
</protein>
<reference key="1">
    <citation type="journal article" date="2005" name="Nature">
        <title>The genome of the social amoeba Dictyostelium discoideum.</title>
        <authorList>
            <person name="Eichinger L."/>
            <person name="Pachebat J.A."/>
            <person name="Gloeckner G."/>
            <person name="Rajandream M.A."/>
            <person name="Sucgang R."/>
            <person name="Berriman M."/>
            <person name="Song J."/>
            <person name="Olsen R."/>
            <person name="Szafranski K."/>
            <person name="Xu Q."/>
            <person name="Tunggal B."/>
            <person name="Kummerfeld S."/>
            <person name="Madera M."/>
            <person name="Konfortov B.A."/>
            <person name="Rivero F."/>
            <person name="Bankier A.T."/>
            <person name="Lehmann R."/>
            <person name="Hamlin N."/>
            <person name="Davies R."/>
            <person name="Gaudet P."/>
            <person name="Fey P."/>
            <person name="Pilcher K."/>
            <person name="Chen G."/>
            <person name="Saunders D."/>
            <person name="Sodergren E.J."/>
            <person name="Davis P."/>
            <person name="Kerhornou A."/>
            <person name="Nie X."/>
            <person name="Hall N."/>
            <person name="Anjard C."/>
            <person name="Hemphill L."/>
            <person name="Bason N."/>
            <person name="Farbrother P."/>
            <person name="Desany B."/>
            <person name="Just E."/>
            <person name="Morio T."/>
            <person name="Rost R."/>
            <person name="Churcher C.M."/>
            <person name="Cooper J."/>
            <person name="Haydock S."/>
            <person name="van Driessche N."/>
            <person name="Cronin A."/>
            <person name="Goodhead I."/>
            <person name="Muzny D.M."/>
            <person name="Mourier T."/>
            <person name="Pain A."/>
            <person name="Lu M."/>
            <person name="Harper D."/>
            <person name="Lindsay R."/>
            <person name="Hauser H."/>
            <person name="James K.D."/>
            <person name="Quiles M."/>
            <person name="Madan Babu M."/>
            <person name="Saito T."/>
            <person name="Buchrieser C."/>
            <person name="Wardroper A."/>
            <person name="Felder M."/>
            <person name="Thangavelu M."/>
            <person name="Johnson D."/>
            <person name="Knights A."/>
            <person name="Loulseged H."/>
            <person name="Mungall K.L."/>
            <person name="Oliver K."/>
            <person name="Price C."/>
            <person name="Quail M.A."/>
            <person name="Urushihara H."/>
            <person name="Hernandez J."/>
            <person name="Rabbinowitsch E."/>
            <person name="Steffen D."/>
            <person name="Sanders M."/>
            <person name="Ma J."/>
            <person name="Kohara Y."/>
            <person name="Sharp S."/>
            <person name="Simmonds M.N."/>
            <person name="Spiegler S."/>
            <person name="Tivey A."/>
            <person name="Sugano S."/>
            <person name="White B."/>
            <person name="Walker D."/>
            <person name="Woodward J.R."/>
            <person name="Winckler T."/>
            <person name="Tanaka Y."/>
            <person name="Shaulsky G."/>
            <person name="Schleicher M."/>
            <person name="Weinstock G.M."/>
            <person name="Rosenthal A."/>
            <person name="Cox E.C."/>
            <person name="Chisholm R.L."/>
            <person name="Gibbs R.A."/>
            <person name="Loomis W.F."/>
            <person name="Platzer M."/>
            <person name="Kay R.R."/>
            <person name="Williams J.G."/>
            <person name="Dear P.H."/>
            <person name="Noegel A.A."/>
            <person name="Barrell B.G."/>
            <person name="Kuspa A."/>
        </authorList>
    </citation>
    <scope>NUCLEOTIDE SEQUENCE [LARGE SCALE GENOMIC DNA]</scope>
    <source>
        <strain>AX4</strain>
    </source>
</reference>
<accession>Q54BE0</accession>
<organism>
    <name type="scientific">Dictyostelium discoideum</name>
    <name type="common">Social amoeba</name>
    <dbReference type="NCBI Taxonomy" id="44689"/>
    <lineage>
        <taxon>Eukaryota</taxon>
        <taxon>Amoebozoa</taxon>
        <taxon>Evosea</taxon>
        <taxon>Eumycetozoa</taxon>
        <taxon>Dictyostelia</taxon>
        <taxon>Dictyosteliales</taxon>
        <taxon>Dictyosteliaceae</taxon>
        <taxon>Dictyostelium</taxon>
    </lineage>
</organism>
<proteinExistence type="inferred from homology"/>
<keyword id="KW-0067">ATP-binding</keyword>
<keyword id="KW-0143">Chaperone</keyword>
<keyword id="KW-0547">Nucleotide-binding</keyword>
<keyword id="KW-1185">Reference proteome</keyword>
<dbReference type="EMBL" id="AAFI02000218">
    <property type="protein sequence ID" value="EAL60649.1"/>
    <property type="molecule type" value="Genomic_DNA"/>
</dbReference>
<dbReference type="RefSeq" id="XP_629089.1">
    <property type="nucleotide sequence ID" value="XM_629087.1"/>
</dbReference>
<dbReference type="SMR" id="Q54BE0"/>
<dbReference type="FunCoup" id="Q54BE0">
    <property type="interactions" value="451"/>
</dbReference>
<dbReference type="STRING" id="44689.Q54BE0"/>
<dbReference type="PaxDb" id="44689-DDB0192086"/>
<dbReference type="EnsemblProtists" id="EAL60649">
    <property type="protein sequence ID" value="EAL60649"/>
    <property type="gene ID" value="DDB_G0293674"/>
</dbReference>
<dbReference type="GeneID" id="8629382"/>
<dbReference type="KEGG" id="ddi:DDB_G0293674"/>
<dbReference type="dictyBase" id="DDB_G0293674">
    <property type="gene designation" value="hspH2"/>
</dbReference>
<dbReference type="VEuPathDB" id="AmoebaDB:DDB_G0293674"/>
<dbReference type="eggNOG" id="KOG0101">
    <property type="taxonomic scope" value="Eukaryota"/>
</dbReference>
<dbReference type="HOGENOM" id="CLU_005965_3_0_1"/>
<dbReference type="InParanoid" id="Q54BE0"/>
<dbReference type="OMA" id="DPIVHSD"/>
<dbReference type="PhylomeDB" id="Q54BE0"/>
<dbReference type="Reactome" id="R-DDI-3371453">
    <property type="pathway name" value="Regulation of HSF1-mediated heat shock response"/>
</dbReference>
<dbReference type="Reactome" id="R-DDI-3371497">
    <property type="pathway name" value="HSP90 chaperone cycle for steroid hormone receptors (SHR) in the presence of ligand"/>
</dbReference>
<dbReference type="Reactome" id="R-DDI-3371571">
    <property type="pathway name" value="HSF1-dependent transactivation"/>
</dbReference>
<dbReference type="Reactome" id="R-DDI-450408">
    <property type="pathway name" value="AUF1 (hnRNP D0) binds and destabilizes mRNA"/>
</dbReference>
<dbReference type="Reactome" id="R-DDI-6798695">
    <property type="pathway name" value="Neutrophil degranulation"/>
</dbReference>
<dbReference type="Reactome" id="R-DDI-9841251">
    <property type="pathway name" value="Mitochondrial unfolded protein response (UPRmt)"/>
</dbReference>
<dbReference type="PRO" id="PR:Q54BE0"/>
<dbReference type="Proteomes" id="UP000002195">
    <property type="component" value="Chromosome 6"/>
</dbReference>
<dbReference type="GO" id="GO:0005737">
    <property type="term" value="C:cytoplasm"/>
    <property type="evidence" value="ECO:0000318"/>
    <property type="project" value="GO_Central"/>
</dbReference>
<dbReference type="GO" id="GO:0005811">
    <property type="term" value="C:lipid droplet"/>
    <property type="evidence" value="ECO:0007005"/>
    <property type="project" value="dictyBase"/>
</dbReference>
<dbReference type="GO" id="GO:0005524">
    <property type="term" value="F:ATP binding"/>
    <property type="evidence" value="ECO:0007669"/>
    <property type="project" value="UniProtKB-KW"/>
</dbReference>
<dbReference type="GO" id="GO:0016887">
    <property type="term" value="F:ATP hydrolysis activity"/>
    <property type="evidence" value="ECO:0000318"/>
    <property type="project" value="GO_Central"/>
</dbReference>
<dbReference type="GO" id="GO:0140662">
    <property type="term" value="F:ATP-dependent protein folding chaperone"/>
    <property type="evidence" value="ECO:0007669"/>
    <property type="project" value="InterPro"/>
</dbReference>
<dbReference type="GO" id="GO:0031072">
    <property type="term" value="F:heat shock protein binding"/>
    <property type="evidence" value="ECO:0000318"/>
    <property type="project" value="GO_Central"/>
</dbReference>
<dbReference type="GO" id="GO:0044183">
    <property type="term" value="F:protein folding chaperone"/>
    <property type="evidence" value="ECO:0000318"/>
    <property type="project" value="GO_Central"/>
</dbReference>
<dbReference type="GO" id="GO:0051085">
    <property type="term" value="P:chaperone cofactor-dependent protein refolding"/>
    <property type="evidence" value="ECO:0000318"/>
    <property type="project" value="GO_Central"/>
</dbReference>
<dbReference type="GO" id="GO:0042026">
    <property type="term" value="P:protein refolding"/>
    <property type="evidence" value="ECO:0000318"/>
    <property type="project" value="GO_Central"/>
</dbReference>
<dbReference type="CDD" id="cd10233">
    <property type="entry name" value="ASKHA_NBD_HSP70_HSPA1"/>
    <property type="match status" value="1"/>
</dbReference>
<dbReference type="FunFam" id="2.60.34.10:FF:000002">
    <property type="entry name" value="Heat shock 70 kDa"/>
    <property type="match status" value="1"/>
</dbReference>
<dbReference type="FunFam" id="3.30.420.40:FF:000172">
    <property type="entry name" value="Heat shock 70 kDa protein"/>
    <property type="match status" value="1"/>
</dbReference>
<dbReference type="FunFam" id="3.30.30.30:FF:000001">
    <property type="entry name" value="heat shock 70 kDa protein-like"/>
    <property type="match status" value="1"/>
</dbReference>
<dbReference type="FunFam" id="3.30.420.40:FF:000028">
    <property type="entry name" value="heat shock 70 kDa protein-like"/>
    <property type="match status" value="1"/>
</dbReference>
<dbReference type="FunFam" id="3.90.640.10:FF:000134">
    <property type="entry name" value="Heat shock cognate 71 kDa protein"/>
    <property type="match status" value="1"/>
</dbReference>
<dbReference type="FunFam" id="1.20.1270.10:FF:000016">
    <property type="entry name" value="Heat shock protein 70"/>
    <property type="match status" value="1"/>
</dbReference>
<dbReference type="FunFam" id="3.30.420.40:FF:000026">
    <property type="entry name" value="Heat shock protein 70"/>
    <property type="match status" value="1"/>
</dbReference>
<dbReference type="Gene3D" id="1.20.1270.10">
    <property type="match status" value="1"/>
</dbReference>
<dbReference type="Gene3D" id="3.30.30.30">
    <property type="match status" value="1"/>
</dbReference>
<dbReference type="Gene3D" id="3.30.420.40">
    <property type="match status" value="2"/>
</dbReference>
<dbReference type="Gene3D" id="3.90.640.10">
    <property type="entry name" value="Actin, Chain A, domain 4"/>
    <property type="match status" value="1"/>
</dbReference>
<dbReference type="Gene3D" id="2.60.34.10">
    <property type="entry name" value="Substrate Binding Domain Of DNAk, Chain A, domain 1"/>
    <property type="match status" value="1"/>
</dbReference>
<dbReference type="InterPro" id="IPR043129">
    <property type="entry name" value="ATPase_NBD"/>
</dbReference>
<dbReference type="InterPro" id="IPR018181">
    <property type="entry name" value="Heat_shock_70_CS"/>
</dbReference>
<dbReference type="InterPro" id="IPR029048">
    <property type="entry name" value="HSP70_C_sf"/>
</dbReference>
<dbReference type="InterPro" id="IPR029047">
    <property type="entry name" value="HSP70_peptide-bd_sf"/>
</dbReference>
<dbReference type="InterPro" id="IPR013126">
    <property type="entry name" value="Hsp_70_fam"/>
</dbReference>
<dbReference type="NCBIfam" id="NF001413">
    <property type="entry name" value="PRK00290.1"/>
    <property type="match status" value="1"/>
</dbReference>
<dbReference type="PANTHER" id="PTHR19375">
    <property type="entry name" value="HEAT SHOCK PROTEIN 70KDA"/>
    <property type="match status" value="1"/>
</dbReference>
<dbReference type="Pfam" id="PF00012">
    <property type="entry name" value="HSP70"/>
    <property type="match status" value="1"/>
</dbReference>
<dbReference type="PRINTS" id="PR00301">
    <property type="entry name" value="HEATSHOCK70"/>
</dbReference>
<dbReference type="SUPFAM" id="SSF53067">
    <property type="entry name" value="Actin-like ATPase domain"/>
    <property type="match status" value="2"/>
</dbReference>
<dbReference type="SUPFAM" id="SSF100934">
    <property type="entry name" value="Heat shock protein 70kD (HSP70), C-terminal subdomain"/>
    <property type="match status" value="1"/>
</dbReference>
<dbReference type="SUPFAM" id="SSF100920">
    <property type="entry name" value="Heat shock protein 70kD (HSP70), peptide-binding domain"/>
    <property type="match status" value="1"/>
</dbReference>
<dbReference type="PROSITE" id="PS00297">
    <property type="entry name" value="HSP70_1"/>
    <property type="match status" value="1"/>
</dbReference>
<dbReference type="PROSITE" id="PS00329">
    <property type="entry name" value="HSP70_2"/>
    <property type="match status" value="1"/>
</dbReference>
<dbReference type="PROSITE" id="PS01036">
    <property type="entry name" value="HSP70_3"/>
    <property type="match status" value="1"/>
</dbReference>
<name>HS7C3_DICDI</name>
<sequence length="630" mass="69947">MTSIGIDLGTTYSCVGVWLNDRVEIIANDQGNRTTPSYVAFNDTERLIGDAAKNQVAMNPINTVFDAKRLIGRKFSDSVVQSDMKHWPFKVITNKNDDKPLIQVDFKGETKTFSPEEISSMVLSKMKETAESYLGKPVNNAVITVPAYFNDGQRQATKDAGTISKLNVQRIINEPSAAAIAYGLDKKGSKSGEIKVLIFDLGGGTFDVSLLSIDDGVFEVLATAGDTHLGGEDFDNRLVNHFVDEFKRKHKKDIMGNQRALRRLRTACERAKRTLSSSSQASVEIDSLYDGIDFYTSITRARFEELCSDLFNNCIEPVEKVLKDCKLDKKSIDEIVLVGGSTRIPKVQQLIQNLFNGKELNKSINPDEAVAYGAAVQAAILSGDKSSRISELIFIDVAPLSLGIETVGGVMTNIVPRNTIIPCKKTQTFSTHTDNQSGVLIQVYEGERTMTKDNNLLGKFELTGIPPAPRGTPQIEVSFDVDSNGILNVTAEDKTTKKVEKITITNDKGRLSLKDITKMVEDAEKFKEQDQQQKERIESKNNLENYIFSVKNSINDQKIISKLSKSDKNIIESETESTLKWLESNQSAEKDEFNQKISDLESIVNPILSKFYQGNNNPKPTTTTFNQDLD</sequence>
<gene>
    <name type="ORF">DDB_G0293674</name>
</gene>
<comment type="function">
    <text evidence="1">May function in protein folding and assembly, and disassembly of protein complexes.</text>
</comment>
<comment type="similarity">
    <text evidence="3">Belongs to the heat shock protein 70 family.</text>
</comment>